<accession>A0A2H1VE33</accession>
<accession>K0A166</accession>
<accession>L7MTK8</accession>
<name>TRDMT_SPOFR</name>
<keyword id="KW-0002">3D-structure</keyword>
<keyword id="KW-0963">Cytoplasm</keyword>
<keyword id="KW-0238">DNA-binding</keyword>
<keyword id="KW-0489">Methyltransferase</keyword>
<keyword id="KW-0539">Nucleus</keyword>
<keyword id="KW-0694">RNA-binding</keyword>
<keyword id="KW-0949">S-adenosyl-L-methionine</keyword>
<keyword id="KW-0808">Transferase</keyword>
<keyword id="KW-0819">tRNA processing</keyword>
<sequence length="332" mass="38406">MSHKILELYSGIGGMHCAWKESGLDGEIVAAVDINTVANSVYKHNFPETNLLNRNIQQLTPQVIKKWNVDTILMSPPCQPFTRNGKYLDDNDPRTNSFLYIIGILDQLDNVDYILMENVKGFENSTVRNLFIDKLKECNFIYQEFLLCPSTVGVPNSRLRYYCTARRNNLTWPFKRGDEIITRLPKDFGVPHSLESIIEEDVDEKFLVPDKILRCAKVFDICYKTSKRSCCFTKAYTHYADGTGSIFTDKPREVVQKCYEEANQNEIGSEKFVELFKELKLRYFTPKEVLMIMCFPKSYNLPTNISMKQCYRLLGNSVNVKVISELLKILFE</sequence>
<gene>
    <name evidence="1" type="primary">TRDMT1</name>
    <name evidence="6" type="synonym">DNMT2</name>
    <name evidence="9" type="ORF">SFRICE_001256</name>
</gene>
<feature type="chain" id="PRO_0000451456" description="tRNA (cytosine(38)-C(5))-methyltransferase">
    <location>
        <begin position="1"/>
        <end position="332"/>
    </location>
</feature>
<feature type="domain" description="SAM-dependent MTase C5-type" evidence="2">
    <location>
        <begin position="3"/>
        <end position="332"/>
    </location>
</feature>
<feature type="active site" evidence="2">
    <location>
        <position position="78"/>
    </location>
</feature>
<feature type="binding site" evidence="4 11">
    <location>
        <begin position="12"/>
        <end position="14"/>
    </location>
    <ligand>
        <name>S-adenosyl-L-homocysteine</name>
        <dbReference type="ChEBI" id="CHEBI:57856"/>
    </ligand>
</feature>
<feature type="binding site" evidence="4 11">
    <location>
        <begin position="33"/>
        <end position="34"/>
    </location>
    <ligand>
        <name>S-adenosyl-L-homocysteine</name>
        <dbReference type="ChEBI" id="CHEBI:57856"/>
    </ligand>
</feature>
<feature type="binding site" evidence="4 11">
    <location>
        <begin position="55"/>
        <end position="56"/>
    </location>
    <ligand>
        <name>S-adenosyl-L-homocysteine</name>
        <dbReference type="ChEBI" id="CHEBI:57856"/>
    </ligand>
</feature>
<feature type="binding site" evidence="5 11">
    <location>
        <position position="75"/>
    </location>
    <ligand>
        <name>S-adenosyl-L-homocysteine</name>
        <dbReference type="ChEBI" id="CHEBI:57856"/>
    </ligand>
</feature>
<feature type="binding site" evidence="5 11">
    <location>
        <position position="79"/>
    </location>
    <ligand>
        <name>S-adenosyl-L-homocysteine</name>
        <dbReference type="ChEBI" id="CHEBI:57856"/>
    </ligand>
</feature>
<feature type="binding site" evidence="5 11">
    <location>
        <position position="97"/>
    </location>
    <ligand>
        <name>S-adenosyl-L-homocysteine</name>
        <dbReference type="ChEBI" id="CHEBI:57856"/>
    </ligand>
</feature>
<feature type="binding site" evidence="4 11">
    <location>
        <begin position="316"/>
        <end position="317"/>
    </location>
    <ligand>
        <name>S-adenosyl-L-homocysteine</name>
        <dbReference type="ChEBI" id="CHEBI:57856"/>
    </ligand>
</feature>
<feature type="mutagenesis site" description="Significantly reduced DNA methyltransferase activity. Significantly reduced DNA methyltransferase activity; when associated with Q-231." evidence="4">
    <original>C</original>
    <variation>Q</variation>
    <location>
        <position position="230"/>
    </location>
</feature>
<feature type="mutagenesis site" description="No effect on DNA methyltransferase activity. Significantly reduced DNA methyltransferase activity; when associated with Q-230." evidence="4">
    <original>C</original>
    <variation>Q</variation>
    <location>
        <position position="231"/>
    </location>
</feature>
<feature type="sequence conflict" description="In Ref. 1; AFS64716." evidence="7" ref="1">
    <original>I</original>
    <variation>L</variation>
    <location>
        <position position="101"/>
    </location>
</feature>
<feature type="sequence conflict" description="In Ref. 1; AFS64716." evidence="7" ref="1">
    <original>G</original>
    <variation>R</variation>
    <location>
        <position position="177"/>
    </location>
</feature>
<feature type="sequence conflict" description="In Ref. 1; AFS64716." evidence="7" ref="1">
    <original>DKI</original>
    <variation>EKM</variation>
    <location>
        <begin position="210"/>
        <end position="212"/>
    </location>
</feature>
<feature type="sequence conflict" description="In Ref. 1; AFS64716." evidence="7" ref="1">
    <original>N</original>
    <variation>K</variation>
    <location>
        <position position="263"/>
    </location>
</feature>
<feature type="sequence conflict" description="In Ref. 1; AFS64716." evidence="7" ref="1">
    <original>S</original>
    <variation>G</variation>
    <location>
        <position position="269"/>
    </location>
</feature>
<feature type="strand" evidence="12">
    <location>
        <begin position="3"/>
        <end position="8"/>
    </location>
</feature>
<feature type="turn" evidence="12">
    <location>
        <begin position="11"/>
        <end position="13"/>
    </location>
</feature>
<feature type="helix" evidence="12">
    <location>
        <begin position="14"/>
        <end position="22"/>
    </location>
</feature>
<feature type="strand" evidence="12">
    <location>
        <begin position="25"/>
        <end position="32"/>
    </location>
</feature>
<feature type="helix" evidence="12">
    <location>
        <begin position="36"/>
        <end position="45"/>
    </location>
</feature>
<feature type="helix" evidence="12">
    <location>
        <begin position="56"/>
        <end position="58"/>
    </location>
</feature>
<feature type="helix" evidence="12">
    <location>
        <begin position="61"/>
        <end position="66"/>
    </location>
</feature>
<feature type="strand" evidence="12">
    <location>
        <begin position="71"/>
        <end position="74"/>
    </location>
</feature>
<feature type="strand" evidence="12">
    <location>
        <begin position="81"/>
        <end position="83"/>
    </location>
</feature>
<feature type="helix" evidence="12">
    <location>
        <begin position="98"/>
        <end position="104"/>
    </location>
</feature>
<feature type="helix" evidence="12">
    <location>
        <begin position="105"/>
        <end position="107"/>
    </location>
</feature>
<feature type="strand" evidence="12">
    <location>
        <begin position="113"/>
        <end position="118"/>
    </location>
</feature>
<feature type="helix" evidence="12">
    <location>
        <begin position="122"/>
        <end position="124"/>
    </location>
</feature>
<feature type="helix" evidence="12">
    <location>
        <begin position="126"/>
        <end position="137"/>
    </location>
</feature>
<feature type="strand" evidence="12">
    <location>
        <begin position="140"/>
        <end position="147"/>
    </location>
</feature>
<feature type="turn" evidence="12">
    <location>
        <begin position="149"/>
        <end position="153"/>
    </location>
</feature>
<feature type="strand" evidence="12">
    <location>
        <begin position="160"/>
        <end position="167"/>
    </location>
</feature>
<feature type="strand" evidence="12">
    <location>
        <begin position="181"/>
        <end position="183"/>
    </location>
</feature>
<feature type="helix" evidence="12">
    <location>
        <begin position="204"/>
        <end position="206"/>
    </location>
</feature>
<feature type="helix" evidence="12">
    <location>
        <begin position="210"/>
        <end position="213"/>
    </location>
</feature>
<feature type="helix" evidence="12">
    <location>
        <begin position="214"/>
        <end position="218"/>
    </location>
</feature>
<feature type="strand" evidence="12">
    <location>
        <begin position="239"/>
        <end position="243"/>
    </location>
</feature>
<feature type="helix" evidence="12">
    <location>
        <begin position="252"/>
        <end position="261"/>
    </location>
</feature>
<feature type="helix" evidence="12">
    <location>
        <begin position="262"/>
        <end position="264"/>
    </location>
</feature>
<feature type="helix" evidence="12">
    <location>
        <begin position="270"/>
        <end position="277"/>
    </location>
</feature>
<feature type="turn" evidence="12">
    <location>
        <begin position="278"/>
        <end position="280"/>
    </location>
</feature>
<feature type="helix" evidence="12">
    <location>
        <begin position="286"/>
        <end position="292"/>
    </location>
</feature>
<feature type="helix" evidence="12">
    <location>
        <begin position="307"/>
        <end position="315"/>
    </location>
</feature>
<feature type="helix" evidence="12">
    <location>
        <begin position="320"/>
        <end position="331"/>
    </location>
</feature>
<evidence type="ECO:0000250" key="1">
    <source>
        <dbReference type="UniProtKB" id="O14717"/>
    </source>
</evidence>
<evidence type="ECO:0000255" key="2">
    <source>
        <dbReference type="PROSITE-ProRule" id="PRU01016"/>
    </source>
</evidence>
<evidence type="ECO:0000255" key="3">
    <source>
        <dbReference type="RuleBase" id="RU000416"/>
    </source>
</evidence>
<evidence type="ECO:0000269" key="4">
    <source>
    </source>
</evidence>
<evidence type="ECO:0000269" key="5">
    <source ref="2"/>
</evidence>
<evidence type="ECO:0000303" key="6">
    <source>
    </source>
</evidence>
<evidence type="ECO:0000305" key="7"/>
<evidence type="ECO:0000312" key="8">
    <source>
        <dbReference type="EMBL" id="AFS64716.1"/>
    </source>
</evidence>
<evidence type="ECO:0000312" key="9">
    <source>
        <dbReference type="EMBL" id="SOQ38672.1"/>
    </source>
</evidence>
<evidence type="ECO:0000312" key="10">
    <source>
        <dbReference type="PDB" id="4H0N"/>
    </source>
</evidence>
<evidence type="ECO:0007744" key="11">
    <source>
        <dbReference type="PDB" id="4H0N"/>
    </source>
</evidence>
<evidence type="ECO:0007829" key="12">
    <source>
        <dbReference type="PDB" id="4H0N"/>
    </source>
</evidence>
<organism evidence="9">
    <name type="scientific">Spodoptera frugiperda</name>
    <name type="common">Fall armyworm</name>
    <dbReference type="NCBI Taxonomy" id="7108"/>
    <lineage>
        <taxon>Eukaryota</taxon>
        <taxon>Metazoa</taxon>
        <taxon>Ecdysozoa</taxon>
        <taxon>Arthropoda</taxon>
        <taxon>Hexapoda</taxon>
        <taxon>Insecta</taxon>
        <taxon>Pterygota</taxon>
        <taxon>Neoptera</taxon>
        <taxon>Endopterygota</taxon>
        <taxon>Lepidoptera</taxon>
        <taxon>Glossata</taxon>
        <taxon>Ditrysia</taxon>
        <taxon>Noctuoidea</taxon>
        <taxon>Noctuidae</taxon>
        <taxon>Amphipyrinae</taxon>
        <taxon>Spodoptera</taxon>
    </lineage>
</organism>
<proteinExistence type="evidence at protein level"/>
<comment type="function">
    <text evidence="1 4">Specifically methylates cytosine 38 in the anticodon loop of tRNA(Asp) (By similarity). Also has DNA (cytosine-5)-methyltransferase activity (PubMed:23103599). Shows affinity for both tRNA(Asp) and DNA substrates (PubMed:23103599).</text>
</comment>
<comment type="catalytic activity">
    <reaction evidence="1">
        <text>cytidine(38) in tRNA + S-adenosyl-L-methionine = 5-methylcytidine(38) in tRNA + S-adenosyl-L-homocysteine + H(+)</text>
        <dbReference type="Rhea" id="RHEA:42956"/>
        <dbReference type="Rhea" id="RHEA-COMP:10299"/>
        <dbReference type="Rhea" id="RHEA-COMP:10300"/>
        <dbReference type="ChEBI" id="CHEBI:15378"/>
        <dbReference type="ChEBI" id="CHEBI:57856"/>
        <dbReference type="ChEBI" id="CHEBI:59789"/>
        <dbReference type="ChEBI" id="CHEBI:74483"/>
        <dbReference type="ChEBI" id="CHEBI:82748"/>
        <dbReference type="EC" id="2.1.1.204"/>
    </reaction>
</comment>
<comment type="catalytic activity">
    <reaction evidence="4">
        <text>a 2'-deoxycytidine in DNA + S-adenosyl-L-methionine = a 5-methyl-2'-deoxycytidine in DNA + S-adenosyl-L-homocysteine + H(+)</text>
        <dbReference type="Rhea" id="RHEA:13681"/>
        <dbReference type="Rhea" id="RHEA-COMP:11369"/>
        <dbReference type="Rhea" id="RHEA-COMP:11370"/>
        <dbReference type="ChEBI" id="CHEBI:15378"/>
        <dbReference type="ChEBI" id="CHEBI:57856"/>
        <dbReference type="ChEBI" id="CHEBI:59789"/>
        <dbReference type="ChEBI" id="CHEBI:85452"/>
        <dbReference type="ChEBI" id="CHEBI:85454"/>
        <dbReference type="EC" id="2.1.1.37"/>
    </reaction>
</comment>
<comment type="subcellular location">
    <subcellularLocation>
        <location evidence="4">Cytoplasm</location>
    </subcellularLocation>
    <subcellularLocation>
        <location evidence="4">Nucleus</location>
    </subcellularLocation>
</comment>
<comment type="similarity">
    <text evidence="2 3">Belongs to the class I-like SAM-binding methyltransferase superfamily. C5-methyltransferase family.</text>
</comment>
<reference evidence="8 10 11" key="1">
    <citation type="journal article" date="2013" name="J. Mol. Cell Biol.">
        <title>Functional and structural characterization of DNMT2 from Spodoptera frugiperda.</title>
        <authorList>
            <person name="Li S."/>
            <person name="Du J."/>
            <person name="Yang H."/>
            <person name="Yin J."/>
            <person name="Ding J."/>
            <person name="Zhong J."/>
        </authorList>
    </citation>
    <scope>NUCLEOTIDE SEQUENCE [MRNA]</scope>
    <scope>X-RAY CRYSTALLOGRAPHY (2.71 ANGSTROMS) IN COMPLEX WITH S-ADENOSYL-L-HOMOCYSTEINE</scope>
    <scope>FUNCTION</scope>
    <scope>CATALYTIC ACTIVITY</scope>
    <scope>SUBCELLULAR LOCATION</scope>
    <scope>MUTAGENESIS OF CYS-230 AND CYS-231</scope>
</reference>
<reference evidence="9" key="2">
    <citation type="submission" date="2016-07" db="EMBL/GenBank/DDBJ databases">
        <authorList>
            <person name="Bretaudeau A."/>
        </authorList>
    </citation>
    <scope>NUCLEOTIDE SEQUENCE [LARGE SCALE GENOMIC DNA]</scope>
    <source>
        <strain evidence="9">Rice</strain>
    </source>
</reference>
<protein>
    <recommendedName>
        <fullName evidence="1">tRNA (cytosine(38)-C(5))-methyltransferase</fullName>
        <ecNumber evidence="1">2.1.1.204</ecNumber>
    </recommendedName>
    <alternativeName>
        <fullName evidence="6">DNA (cytosine-5)-methyltransferase-like protein 2</fullName>
        <shortName evidence="6">Dnmt2</shortName>
        <ecNumber evidence="4">2.1.1.37</ecNumber>
    </alternativeName>
</protein>
<dbReference type="EC" id="2.1.1.204" evidence="1"/>
<dbReference type="EC" id="2.1.1.37" evidence="4"/>
<dbReference type="EMBL" id="JX428898">
    <property type="protein sequence ID" value="AFS64716.1"/>
    <property type="molecule type" value="mRNA"/>
</dbReference>
<dbReference type="EMBL" id="ODYU01001870">
    <property type="protein sequence ID" value="SOQ38672.1"/>
    <property type="molecule type" value="Genomic_DNA"/>
</dbReference>
<dbReference type="PDB" id="4H0N">
    <property type="method" value="X-ray"/>
    <property type="resolution" value="2.71 A"/>
    <property type="chains" value="A/B/C/D=1-332"/>
</dbReference>
<dbReference type="PDBsum" id="4H0N"/>
<dbReference type="SMR" id="A0A2H1VE33"/>
<dbReference type="EvolutionaryTrace" id="A0A2H1VE33"/>
<dbReference type="Proteomes" id="UP000829999">
    <property type="component" value="Unplaced"/>
</dbReference>
<dbReference type="GO" id="GO:0005737">
    <property type="term" value="C:cytoplasm"/>
    <property type="evidence" value="ECO:0007669"/>
    <property type="project" value="UniProtKB-SubCell"/>
</dbReference>
<dbReference type="GO" id="GO:0005634">
    <property type="term" value="C:nucleus"/>
    <property type="evidence" value="ECO:0007669"/>
    <property type="project" value="UniProtKB-SubCell"/>
</dbReference>
<dbReference type="GO" id="GO:0003886">
    <property type="term" value="F:DNA (cytosine-5-)-methyltransferase activity"/>
    <property type="evidence" value="ECO:0007669"/>
    <property type="project" value="UniProtKB-EC"/>
</dbReference>
<dbReference type="GO" id="GO:0003677">
    <property type="term" value="F:DNA binding"/>
    <property type="evidence" value="ECO:0007669"/>
    <property type="project" value="UniProtKB-KW"/>
</dbReference>
<dbReference type="GO" id="GO:0003723">
    <property type="term" value="F:RNA binding"/>
    <property type="evidence" value="ECO:0007669"/>
    <property type="project" value="UniProtKB-KW"/>
</dbReference>
<dbReference type="GO" id="GO:0032259">
    <property type="term" value="P:methylation"/>
    <property type="evidence" value="ECO:0007669"/>
    <property type="project" value="UniProtKB-KW"/>
</dbReference>
<dbReference type="GO" id="GO:0008033">
    <property type="term" value="P:tRNA processing"/>
    <property type="evidence" value="ECO:0007669"/>
    <property type="project" value="UniProtKB-KW"/>
</dbReference>
<dbReference type="Gene3D" id="3.90.120.10">
    <property type="entry name" value="DNA Methylase, subunit A, domain 2"/>
    <property type="match status" value="1"/>
</dbReference>
<dbReference type="Gene3D" id="3.40.50.150">
    <property type="entry name" value="Vaccinia Virus protein VP39"/>
    <property type="match status" value="1"/>
</dbReference>
<dbReference type="InterPro" id="IPR050750">
    <property type="entry name" value="C5-MTase"/>
</dbReference>
<dbReference type="InterPro" id="IPR001525">
    <property type="entry name" value="C5_MeTfrase"/>
</dbReference>
<dbReference type="InterPro" id="IPR031303">
    <property type="entry name" value="C5_meth_CS"/>
</dbReference>
<dbReference type="InterPro" id="IPR029063">
    <property type="entry name" value="SAM-dependent_MTases_sf"/>
</dbReference>
<dbReference type="NCBIfam" id="TIGR00675">
    <property type="entry name" value="dcm"/>
    <property type="match status" value="1"/>
</dbReference>
<dbReference type="PANTHER" id="PTHR46098">
    <property type="entry name" value="TRNA (CYTOSINE(38)-C(5))-METHYLTRANSFERASE"/>
    <property type="match status" value="1"/>
</dbReference>
<dbReference type="PANTHER" id="PTHR46098:SF1">
    <property type="entry name" value="TRNA (CYTOSINE(38)-C(5))-METHYLTRANSFERASE"/>
    <property type="match status" value="1"/>
</dbReference>
<dbReference type="Pfam" id="PF00145">
    <property type="entry name" value="DNA_methylase"/>
    <property type="match status" value="1"/>
</dbReference>
<dbReference type="PRINTS" id="PR00105">
    <property type="entry name" value="C5METTRFRASE"/>
</dbReference>
<dbReference type="SUPFAM" id="SSF53335">
    <property type="entry name" value="S-adenosyl-L-methionine-dependent methyltransferases"/>
    <property type="match status" value="1"/>
</dbReference>
<dbReference type="PROSITE" id="PS00095">
    <property type="entry name" value="C5_MTASE_2"/>
    <property type="match status" value="1"/>
</dbReference>
<dbReference type="PROSITE" id="PS51679">
    <property type="entry name" value="SAM_MT_C5"/>
    <property type="match status" value="1"/>
</dbReference>